<evidence type="ECO:0000255" key="1">
    <source>
        <dbReference type="HAMAP-Rule" id="MF_01152"/>
    </source>
</evidence>
<accession>Q66ES9</accession>
<keyword id="KW-0143">Chaperone</keyword>
<keyword id="KW-0963">Cytoplasm</keyword>
<keyword id="KW-0235">DNA replication</keyword>
<keyword id="KW-0479">Metal-binding</keyword>
<keyword id="KW-0677">Repeat</keyword>
<keyword id="KW-0346">Stress response</keyword>
<keyword id="KW-0862">Zinc</keyword>
<keyword id="KW-0863">Zinc-finger</keyword>
<gene>
    <name evidence="1" type="primary">dnaJ</name>
    <name type="ordered locus">YPTB0612</name>
</gene>
<name>DNAJ_YERPS</name>
<sequence length="379" mass="41279">MAKRDYYEVLGVSRDAEEREIKKAYKRLAMKFHPDRQSEDKNAEEKFKEAKEAYEILTDAQKRAAYDQYGHAAFEQGGMGGGGFGGGGGGADFSDIFGDVFGDIFGGGRRQQRASRGSDLRYNMDLTLEEAVRGVTKEIRIPTLDECDVCHGSGAKPGSSPVTCPTCHGAGQVQMRQGFFTVQQACPHCHGRGQIIKDPCNKCHGHGRVEKSKTLSVKIPAGVDTGDRIRLSGEGEAGEHGAPSGDLYVQVQVKAHPIFEREGNNLYCEVPINFAMAALGGEIEVPTLDGRVKLKIPAETQTGKMFRMRGKGVKSVRGGSQGDLLCRVVVETPVSLSEKQKQLLRELEESFVGAAGEKNSPRAKSFLDGVKKFFDDLTR</sequence>
<feature type="chain" id="PRO_0000070943" description="Chaperone protein DnaJ">
    <location>
        <begin position="1"/>
        <end position="379"/>
    </location>
</feature>
<feature type="domain" description="J" evidence="1">
    <location>
        <begin position="5"/>
        <end position="70"/>
    </location>
</feature>
<feature type="repeat" description="CXXCXGXG motif">
    <location>
        <begin position="147"/>
        <end position="154"/>
    </location>
</feature>
<feature type="repeat" description="CXXCXGXG motif">
    <location>
        <begin position="164"/>
        <end position="171"/>
    </location>
</feature>
<feature type="repeat" description="CXXCXGXG motif">
    <location>
        <begin position="186"/>
        <end position="193"/>
    </location>
</feature>
<feature type="repeat" description="CXXCXGXG motif">
    <location>
        <begin position="200"/>
        <end position="207"/>
    </location>
</feature>
<feature type="zinc finger region" description="CR-type" evidence="1">
    <location>
        <begin position="134"/>
        <end position="212"/>
    </location>
</feature>
<feature type="binding site" evidence="1">
    <location>
        <position position="147"/>
    </location>
    <ligand>
        <name>Zn(2+)</name>
        <dbReference type="ChEBI" id="CHEBI:29105"/>
        <label>1</label>
    </ligand>
</feature>
<feature type="binding site" evidence="1">
    <location>
        <position position="150"/>
    </location>
    <ligand>
        <name>Zn(2+)</name>
        <dbReference type="ChEBI" id="CHEBI:29105"/>
        <label>1</label>
    </ligand>
</feature>
<feature type="binding site" evidence="1">
    <location>
        <position position="164"/>
    </location>
    <ligand>
        <name>Zn(2+)</name>
        <dbReference type="ChEBI" id="CHEBI:29105"/>
        <label>2</label>
    </ligand>
</feature>
<feature type="binding site" evidence="1">
    <location>
        <position position="167"/>
    </location>
    <ligand>
        <name>Zn(2+)</name>
        <dbReference type="ChEBI" id="CHEBI:29105"/>
        <label>2</label>
    </ligand>
</feature>
<feature type="binding site" evidence="1">
    <location>
        <position position="186"/>
    </location>
    <ligand>
        <name>Zn(2+)</name>
        <dbReference type="ChEBI" id="CHEBI:29105"/>
        <label>2</label>
    </ligand>
</feature>
<feature type="binding site" evidence="1">
    <location>
        <position position="189"/>
    </location>
    <ligand>
        <name>Zn(2+)</name>
        <dbReference type="ChEBI" id="CHEBI:29105"/>
        <label>2</label>
    </ligand>
</feature>
<feature type="binding site" evidence="1">
    <location>
        <position position="200"/>
    </location>
    <ligand>
        <name>Zn(2+)</name>
        <dbReference type="ChEBI" id="CHEBI:29105"/>
        <label>1</label>
    </ligand>
</feature>
<feature type="binding site" evidence="1">
    <location>
        <position position="203"/>
    </location>
    <ligand>
        <name>Zn(2+)</name>
        <dbReference type="ChEBI" id="CHEBI:29105"/>
        <label>1</label>
    </ligand>
</feature>
<comment type="function">
    <text evidence="1">Participates actively in the response to hyperosmotic and heat shock by preventing the aggregation of stress-denatured proteins and by disaggregating proteins, also in an autonomous, DnaK-independent fashion. Unfolded proteins bind initially to DnaJ; upon interaction with the DnaJ-bound protein, DnaK hydrolyzes its bound ATP, resulting in the formation of a stable complex. GrpE releases ADP from DnaK; ATP binding to DnaK triggers the release of the substrate protein, thus completing the reaction cycle. Several rounds of ATP-dependent interactions between DnaJ, DnaK and GrpE are required for fully efficient folding. Also involved, together with DnaK and GrpE, in the DNA replication of plasmids through activation of initiation proteins.</text>
</comment>
<comment type="cofactor">
    <cofactor evidence="1">
        <name>Zn(2+)</name>
        <dbReference type="ChEBI" id="CHEBI:29105"/>
    </cofactor>
    <text evidence="1">Binds 2 Zn(2+) ions per monomer.</text>
</comment>
<comment type="subunit">
    <text evidence="1">Homodimer.</text>
</comment>
<comment type="subcellular location">
    <subcellularLocation>
        <location evidence="1">Cytoplasm</location>
    </subcellularLocation>
</comment>
<comment type="domain">
    <text evidence="1">The J domain is necessary and sufficient to stimulate DnaK ATPase activity. Zinc center 1 plays an important role in the autonomous, DnaK-independent chaperone activity of DnaJ. Zinc center 2 is essential for interaction with DnaK and for DnaJ activity.</text>
</comment>
<comment type="similarity">
    <text evidence="1">Belongs to the DnaJ family.</text>
</comment>
<reference key="1">
    <citation type="journal article" date="2004" name="Proc. Natl. Acad. Sci. U.S.A.">
        <title>Insights into the evolution of Yersinia pestis through whole-genome comparison with Yersinia pseudotuberculosis.</title>
        <authorList>
            <person name="Chain P.S.G."/>
            <person name="Carniel E."/>
            <person name="Larimer F.W."/>
            <person name="Lamerdin J."/>
            <person name="Stoutland P.O."/>
            <person name="Regala W.M."/>
            <person name="Georgescu A.M."/>
            <person name="Vergez L.M."/>
            <person name="Land M.L."/>
            <person name="Motin V.L."/>
            <person name="Brubaker R.R."/>
            <person name="Fowler J."/>
            <person name="Hinnebusch J."/>
            <person name="Marceau M."/>
            <person name="Medigue C."/>
            <person name="Simonet M."/>
            <person name="Chenal-Francisque V."/>
            <person name="Souza B."/>
            <person name="Dacheux D."/>
            <person name="Elliott J.M."/>
            <person name="Derbise A."/>
            <person name="Hauser L.J."/>
            <person name="Garcia E."/>
        </authorList>
    </citation>
    <scope>NUCLEOTIDE SEQUENCE [LARGE SCALE GENOMIC DNA]</scope>
    <source>
        <strain>IP32953</strain>
    </source>
</reference>
<organism>
    <name type="scientific">Yersinia pseudotuberculosis serotype I (strain IP32953)</name>
    <dbReference type="NCBI Taxonomy" id="273123"/>
    <lineage>
        <taxon>Bacteria</taxon>
        <taxon>Pseudomonadati</taxon>
        <taxon>Pseudomonadota</taxon>
        <taxon>Gammaproteobacteria</taxon>
        <taxon>Enterobacterales</taxon>
        <taxon>Yersiniaceae</taxon>
        <taxon>Yersinia</taxon>
    </lineage>
</organism>
<protein>
    <recommendedName>
        <fullName evidence="1">Chaperone protein DnaJ</fullName>
    </recommendedName>
</protein>
<dbReference type="EMBL" id="BX936398">
    <property type="protein sequence ID" value="CAH19852.1"/>
    <property type="molecule type" value="Genomic_DNA"/>
</dbReference>
<dbReference type="RefSeq" id="WP_002209249.1">
    <property type="nucleotide sequence ID" value="NZ_CP009712.1"/>
</dbReference>
<dbReference type="SMR" id="Q66ES9"/>
<dbReference type="GeneID" id="57974140"/>
<dbReference type="KEGG" id="ypo:BZ17_1944"/>
<dbReference type="KEGG" id="yps:YPTB0612"/>
<dbReference type="PATRIC" id="fig|273123.14.peg.2068"/>
<dbReference type="Proteomes" id="UP000001011">
    <property type="component" value="Chromosome"/>
</dbReference>
<dbReference type="GO" id="GO:0005737">
    <property type="term" value="C:cytoplasm"/>
    <property type="evidence" value="ECO:0007669"/>
    <property type="project" value="UniProtKB-SubCell"/>
</dbReference>
<dbReference type="GO" id="GO:0005524">
    <property type="term" value="F:ATP binding"/>
    <property type="evidence" value="ECO:0007669"/>
    <property type="project" value="InterPro"/>
</dbReference>
<dbReference type="GO" id="GO:0031072">
    <property type="term" value="F:heat shock protein binding"/>
    <property type="evidence" value="ECO:0007669"/>
    <property type="project" value="InterPro"/>
</dbReference>
<dbReference type="GO" id="GO:0051082">
    <property type="term" value="F:unfolded protein binding"/>
    <property type="evidence" value="ECO:0007669"/>
    <property type="project" value="UniProtKB-UniRule"/>
</dbReference>
<dbReference type="GO" id="GO:0008270">
    <property type="term" value="F:zinc ion binding"/>
    <property type="evidence" value="ECO:0007669"/>
    <property type="project" value="UniProtKB-UniRule"/>
</dbReference>
<dbReference type="GO" id="GO:0051085">
    <property type="term" value="P:chaperone cofactor-dependent protein refolding"/>
    <property type="evidence" value="ECO:0007669"/>
    <property type="project" value="TreeGrafter"/>
</dbReference>
<dbReference type="GO" id="GO:0006260">
    <property type="term" value="P:DNA replication"/>
    <property type="evidence" value="ECO:0007669"/>
    <property type="project" value="UniProtKB-KW"/>
</dbReference>
<dbReference type="GO" id="GO:0042026">
    <property type="term" value="P:protein refolding"/>
    <property type="evidence" value="ECO:0007669"/>
    <property type="project" value="TreeGrafter"/>
</dbReference>
<dbReference type="GO" id="GO:0009408">
    <property type="term" value="P:response to heat"/>
    <property type="evidence" value="ECO:0007669"/>
    <property type="project" value="InterPro"/>
</dbReference>
<dbReference type="CDD" id="cd06257">
    <property type="entry name" value="DnaJ"/>
    <property type="match status" value="1"/>
</dbReference>
<dbReference type="CDD" id="cd10747">
    <property type="entry name" value="DnaJ_C"/>
    <property type="match status" value="1"/>
</dbReference>
<dbReference type="CDD" id="cd10719">
    <property type="entry name" value="DnaJ_zf"/>
    <property type="match status" value="1"/>
</dbReference>
<dbReference type="FunFam" id="1.10.287.110:FF:000003">
    <property type="entry name" value="Molecular chaperone DnaJ"/>
    <property type="match status" value="1"/>
</dbReference>
<dbReference type="FunFam" id="2.10.230.10:FF:000002">
    <property type="entry name" value="Molecular chaperone DnaJ"/>
    <property type="match status" value="1"/>
</dbReference>
<dbReference type="FunFam" id="2.60.260.20:FF:000004">
    <property type="entry name" value="Molecular chaperone DnaJ"/>
    <property type="match status" value="1"/>
</dbReference>
<dbReference type="Gene3D" id="1.10.287.110">
    <property type="entry name" value="DnaJ domain"/>
    <property type="match status" value="1"/>
</dbReference>
<dbReference type="Gene3D" id="2.10.230.10">
    <property type="entry name" value="Heat shock protein DnaJ, cysteine-rich domain"/>
    <property type="match status" value="1"/>
</dbReference>
<dbReference type="Gene3D" id="2.60.260.20">
    <property type="entry name" value="Urease metallochaperone UreE, N-terminal domain"/>
    <property type="match status" value="2"/>
</dbReference>
<dbReference type="HAMAP" id="MF_01152">
    <property type="entry name" value="DnaJ"/>
    <property type="match status" value="1"/>
</dbReference>
<dbReference type="InterPro" id="IPR012724">
    <property type="entry name" value="DnaJ"/>
</dbReference>
<dbReference type="InterPro" id="IPR002939">
    <property type="entry name" value="DnaJ_C"/>
</dbReference>
<dbReference type="InterPro" id="IPR001623">
    <property type="entry name" value="DnaJ_domain"/>
</dbReference>
<dbReference type="InterPro" id="IPR018253">
    <property type="entry name" value="DnaJ_domain_CS"/>
</dbReference>
<dbReference type="InterPro" id="IPR008971">
    <property type="entry name" value="HSP40/DnaJ_pept-bd"/>
</dbReference>
<dbReference type="InterPro" id="IPR001305">
    <property type="entry name" value="HSP_DnaJ_Cys-rich_dom"/>
</dbReference>
<dbReference type="InterPro" id="IPR036410">
    <property type="entry name" value="HSP_DnaJ_Cys-rich_dom_sf"/>
</dbReference>
<dbReference type="InterPro" id="IPR036869">
    <property type="entry name" value="J_dom_sf"/>
</dbReference>
<dbReference type="NCBIfam" id="TIGR02349">
    <property type="entry name" value="DnaJ_bact"/>
    <property type="match status" value="1"/>
</dbReference>
<dbReference type="NCBIfam" id="NF008035">
    <property type="entry name" value="PRK10767.1"/>
    <property type="match status" value="1"/>
</dbReference>
<dbReference type="PANTHER" id="PTHR43096:SF48">
    <property type="entry name" value="CHAPERONE PROTEIN DNAJ"/>
    <property type="match status" value="1"/>
</dbReference>
<dbReference type="PANTHER" id="PTHR43096">
    <property type="entry name" value="DNAJ HOMOLOG 1, MITOCHONDRIAL-RELATED"/>
    <property type="match status" value="1"/>
</dbReference>
<dbReference type="Pfam" id="PF00226">
    <property type="entry name" value="DnaJ"/>
    <property type="match status" value="1"/>
</dbReference>
<dbReference type="Pfam" id="PF01556">
    <property type="entry name" value="DnaJ_C"/>
    <property type="match status" value="1"/>
</dbReference>
<dbReference type="Pfam" id="PF00684">
    <property type="entry name" value="DnaJ_CXXCXGXG"/>
    <property type="match status" value="1"/>
</dbReference>
<dbReference type="PRINTS" id="PR00625">
    <property type="entry name" value="JDOMAIN"/>
</dbReference>
<dbReference type="SMART" id="SM00271">
    <property type="entry name" value="DnaJ"/>
    <property type="match status" value="1"/>
</dbReference>
<dbReference type="SUPFAM" id="SSF46565">
    <property type="entry name" value="Chaperone J-domain"/>
    <property type="match status" value="1"/>
</dbReference>
<dbReference type="SUPFAM" id="SSF57938">
    <property type="entry name" value="DnaJ/Hsp40 cysteine-rich domain"/>
    <property type="match status" value="1"/>
</dbReference>
<dbReference type="SUPFAM" id="SSF49493">
    <property type="entry name" value="HSP40/DnaJ peptide-binding domain"/>
    <property type="match status" value="2"/>
</dbReference>
<dbReference type="PROSITE" id="PS00636">
    <property type="entry name" value="DNAJ_1"/>
    <property type="match status" value="1"/>
</dbReference>
<dbReference type="PROSITE" id="PS50076">
    <property type="entry name" value="DNAJ_2"/>
    <property type="match status" value="1"/>
</dbReference>
<dbReference type="PROSITE" id="PS51188">
    <property type="entry name" value="ZF_CR"/>
    <property type="match status" value="1"/>
</dbReference>
<proteinExistence type="inferred from homology"/>